<comment type="function">
    <text evidence="4 5 6 8 9 12 14">Subunit of the 11S REG-gamma (also called PA28-gamma) proteasome regulator, a doughnut-shaped homoheptamer which associates with the proteasome. 11S REG-gamma activates the trypsin-like catalytic subunit of the proteasome but inhibits the chymotrypsin-like and postglutamyl-preferring (PGPH) subunits. Facilitates the MDM2-p53/TP53 interaction which promotes ubiquitination- and MDM2-dependent proteasomal degradation of p53/TP53, limiting its accumulation and resulting in inhibited apoptosis after DNA damage. May also be involved in cell cycle regulation. Mediates CCAR2 and CHEK2-dependent SIRT1 inhibition (PubMed:25361978).</text>
</comment>
<comment type="subunit">
    <text evidence="2 4 5 6 9 11 12 13 14">Homoheptamer; the stability of the heptamer is essential for the specific activation of the trypsine-like subunit and inhibition of the chymotrypsin-like and postglutamyl-preferring (PGPH) subunits of the proteasome. Interacts with p53/TP53 and MDM2. Interacts with MAP3K3 (By similarity). Associates with the proteasome. Interacts with CCAR2. Interacts with PSME3IP1 (via C-terminus); the interaction is direct and promotes the association of PSME3 with the 20S proteasome (PubMed:29934401). Interacts with COIL; the interaction is inhibited by PSME3IP1 (PubMed:29934401).</text>
</comment>
<comment type="subunit">
    <text evidence="10">(Microbial infection) Interacts with human cytomegalovirus UL27.</text>
</comment>
<comment type="interaction">
    <interactant intactId="EBI-355546">
        <id>P61289</id>
    </interactant>
    <interactant intactId="EBI-16432404">
        <id>A0A0S2Z645</id>
        <label>ABCF3</label>
    </interactant>
    <organismsDiffer>false</organismsDiffer>
    <experiments>3</experiments>
</comment>
<comment type="interaction">
    <interactant intactId="EBI-355546">
        <id>P61289</id>
    </interactant>
    <interactant intactId="EBI-945980">
        <id>P54259</id>
        <label>ATN1</label>
    </interactant>
    <organismsDiffer>false</organismsDiffer>
    <experiments>3</experiments>
</comment>
<comment type="interaction">
    <interactant intactId="EBI-355546">
        <id>P61289</id>
    </interactant>
    <interactant intactId="EBI-11954292">
        <id>Q86V38</id>
        <label>ATN1</label>
    </interactant>
    <organismsDiffer>false</organismsDiffer>
    <experiments>3</experiments>
</comment>
<comment type="interaction">
    <interactant intactId="EBI-355546">
        <id>P61289</id>
    </interactant>
    <interactant intactId="EBI-748297">
        <id>Q9BXC9</id>
        <label>BBS2</label>
    </interactant>
    <organismsDiffer>false</organismsDiffer>
    <experiments>7</experiments>
</comment>
<comment type="interaction">
    <interactant intactId="EBI-355546">
        <id>P61289</id>
    </interactant>
    <interactant intactId="EBI-1051746">
        <id>P30305</id>
        <label>CDC25B</label>
    </interactant>
    <organismsDiffer>false</organismsDiffer>
    <experiments>3</experiments>
</comment>
<comment type="interaction">
    <interactant intactId="EBI-355546">
        <id>P61289</id>
    </interactant>
    <interactant intactId="EBI-11063830">
        <id>Q86X02</id>
        <label>CDR2L</label>
    </interactant>
    <organismsDiffer>false</organismsDiffer>
    <experiments>6</experiments>
</comment>
<comment type="interaction">
    <interactant intactId="EBI-355546">
        <id>P61289</id>
    </interactant>
    <interactant intactId="EBI-945751">
        <id>P38432</id>
        <label>COIL</label>
    </interactant>
    <organismsDiffer>false</organismsDiffer>
    <experiments>10</experiments>
</comment>
<comment type="interaction">
    <interactant intactId="EBI-355546">
        <id>P61289</id>
    </interactant>
    <interactant intactId="EBI-6875961">
        <id>P02489</id>
        <label>CRYAA</label>
    </interactant>
    <organismsDiffer>false</organismsDiffer>
    <experiments>3</experiments>
</comment>
<comment type="interaction">
    <interactant intactId="EBI-355546">
        <id>P61289</id>
    </interactant>
    <interactant intactId="EBI-10233719">
        <id>Q14689-6</id>
        <label>DIP2A</label>
    </interactant>
    <organismsDiffer>false</organismsDiffer>
    <experiments>3</experiments>
</comment>
<comment type="interaction">
    <interactant intactId="EBI-355546">
        <id>P61289</id>
    </interactant>
    <interactant intactId="EBI-9679045">
        <id>Q9NQL9</id>
        <label>DMRT3</label>
    </interactant>
    <organismsDiffer>false</organismsDiffer>
    <experiments>3</experiments>
</comment>
<comment type="interaction">
    <interactant intactId="EBI-355546">
        <id>P61289</id>
    </interactant>
    <interactant intactId="EBI-739789">
        <id>Q92997</id>
        <label>DVL3</label>
    </interactant>
    <organismsDiffer>false</organismsDiffer>
    <experiments>3</experiments>
</comment>
<comment type="interaction">
    <interactant intactId="EBI-355546">
        <id>P61289</id>
    </interactant>
    <interactant intactId="EBI-769261">
        <id>Q96JC9</id>
        <label>EAF1</label>
    </interactant>
    <organismsDiffer>false</organismsDiffer>
    <experiments>9</experiments>
</comment>
<comment type="interaction">
    <interactant intactId="EBI-355546">
        <id>P61289</id>
    </interactant>
    <interactant intactId="EBI-1245604">
        <id>Q96CJ1</id>
        <label>EAF2</label>
    </interactant>
    <organismsDiffer>false</organismsDiffer>
    <experiments>3</experiments>
</comment>
<comment type="interaction">
    <interactant intactId="EBI-355546">
        <id>P61289</id>
    </interactant>
    <interactant intactId="EBI-11959077">
        <id>Q6PCT2-2</id>
        <label>FBXL19</label>
    </interactant>
    <organismsDiffer>false</organismsDiffer>
    <experiments>3</experiments>
</comment>
<comment type="interaction">
    <interactant intactId="EBI-355546">
        <id>P61289</id>
    </interactant>
    <interactant intactId="EBI-1161222">
        <id>Q9Y3I1</id>
        <label>FBXO7</label>
    </interactant>
    <organismsDiffer>false</organismsDiffer>
    <experiments>3</experiments>
</comment>
<comment type="interaction">
    <interactant intactId="EBI-355546">
        <id>P61289</id>
    </interactant>
    <interactant intactId="EBI-11320806">
        <id>Q9NU39</id>
        <label>FOXD4L1</label>
    </interactant>
    <organismsDiffer>false</organismsDiffer>
    <experiments>3</experiments>
</comment>
<comment type="interaction">
    <interactant intactId="EBI-355546">
        <id>P61289</id>
    </interactant>
    <interactant intactId="EBI-11959863">
        <id>Q9NWQ4-1</id>
        <label>GPATCH2L</label>
    </interactant>
    <organismsDiffer>false</organismsDiffer>
    <experiments>3</experiments>
</comment>
<comment type="interaction">
    <interactant intactId="EBI-355546">
        <id>P61289</id>
    </interactant>
    <interactant intactId="EBI-16399628">
        <id>P31942-2</id>
        <label>HNRNPH3</label>
    </interactant>
    <organismsDiffer>false</organismsDiffer>
    <experiments>3</experiments>
</comment>
<comment type="interaction">
    <interactant intactId="EBI-355546">
        <id>P61289</id>
    </interactant>
    <interactant intactId="EBI-10236940">
        <id>Q15735</id>
        <label>INPP5J</label>
    </interactant>
    <organismsDiffer>false</organismsDiffer>
    <experiments>3</experiments>
</comment>
<comment type="interaction">
    <interactant intactId="EBI-355546">
        <id>P61289</id>
    </interactant>
    <interactant intactId="EBI-473695">
        <id>Q8WVZ9</id>
        <label>KBTBD7</label>
    </interactant>
    <organismsDiffer>false</organismsDiffer>
    <experiments>3</experiments>
</comment>
<comment type="interaction">
    <interactant intactId="EBI-355546">
        <id>P61289</id>
    </interactant>
    <interactant intactId="EBI-2432309">
        <id>Q92876</id>
        <label>KLK6</label>
    </interactant>
    <organismsDiffer>false</organismsDiffer>
    <experiments>3</experiments>
</comment>
<comment type="interaction">
    <interactant intactId="EBI-355546">
        <id>P61289</id>
    </interactant>
    <interactant intactId="EBI-739832">
        <id>Q8TBB1</id>
        <label>LNX1</label>
    </interactant>
    <organismsDiffer>false</organismsDiffer>
    <experiments>3</experiments>
</comment>
<comment type="interaction">
    <interactant intactId="EBI-355546">
        <id>P61289</id>
    </interactant>
    <interactant intactId="EBI-389668">
        <id>Q00987</id>
        <label>MDM2</label>
    </interactant>
    <organismsDiffer>false</organismsDiffer>
    <experiments>8</experiments>
</comment>
<comment type="interaction">
    <interactant intactId="EBI-355546">
        <id>P61289</id>
    </interactant>
    <interactant intactId="EBI-16439278">
        <id>Q6FHY5</id>
        <label>MEOX2</label>
    </interactant>
    <organismsDiffer>false</organismsDiffer>
    <experiments>3</experiments>
</comment>
<comment type="interaction">
    <interactant intactId="EBI-355546">
        <id>P61289</id>
    </interactant>
    <interactant intactId="EBI-81196">
        <id>Q9Y6Q9</id>
        <label>NCOA3</label>
    </interactant>
    <organismsDiffer>false</organismsDiffer>
    <experiments>5</experiments>
</comment>
<comment type="interaction">
    <interactant intactId="EBI-355546">
        <id>P61289</id>
    </interactant>
    <interactant intactId="EBI-741158">
        <id>Q96HA8</id>
        <label>NTAQ1</label>
    </interactant>
    <organismsDiffer>false</organismsDiffer>
    <experiments>5</experiments>
</comment>
<comment type="interaction">
    <interactant intactId="EBI-355546">
        <id>P61289</id>
    </interactant>
    <interactant intactId="EBI-357275">
        <id>Q99471</id>
        <label>PFDN5</label>
    </interactant>
    <organismsDiffer>false</organismsDiffer>
    <experiments>6</experiments>
</comment>
<comment type="interaction">
    <interactant intactId="EBI-355546">
        <id>P61289</id>
    </interactant>
    <interactant intactId="EBI-79165">
        <id>Q9NRD5</id>
        <label>PICK1</label>
    </interactant>
    <organismsDiffer>false</organismsDiffer>
    <experiments>3</experiments>
</comment>
<comment type="interaction">
    <interactant intactId="EBI-355546">
        <id>P61289</id>
    </interactant>
    <interactant intactId="EBI-1053424">
        <id>O43741</id>
        <label>PRKAB2</label>
    </interactant>
    <organismsDiffer>false</organismsDiffer>
    <experiments>9</experiments>
</comment>
<comment type="interaction">
    <interactant intactId="EBI-355546">
        <id>P61289</id>
    </interactant>
    <interactant intactId="EBI-740924">
        <id>Q9NZ81</id>
        <label>PRR13</label>
    </interactant>
    <organismsDiffer>false</organismsDiffer>
    <experiments>6</experiments>
</comment>
<comment type="interaction">
    <interactant intactId="EBI-355546">
        <id>P61289</id>
    </interactant>
    <interactant intactId="EBI-355546">
        <id>P61289</id>
        <label>PSME3</label>
    </interactant>
    <organismsDiffer>false</organismsDiffer>
    <experiments>8</experiments>
</comment>
<comment type="interaction">
    <interactant intactId="EBI-355546">
        <id>P61289</id>
    </interactant>
    <interactant intactId="EBI-2855824">
        <id>Q9UNE2</id>
        <label>RPH3AL</label>
    </interactant>
    <organismsDiffer>false</organismsDiffer>
    <experiments>3</experiments>
</comment>
<comment type="interaction">
    <interactant intactId="EBI-355546">
        <id>P61289</id>
    </interactant>
    <interactant intactId="EBI-356336">
        <id>P42677</id>
        <label>RPS27</label>
    </interactant>
    <organismsDiffer>false</organismsDiffer>
    <experiments>3</experiments>
</comment>
<comment type="interaction">
    <interactant intactId="EBI-355546">
        <id>P61289</id>
    </interactant>
    <interactant intactId="EBI-976466">
        <id>Q9HCE7</id>
        <label>SMURF1</label>
    </interactant>
    <organismsDiffer>false</organismsDiffer>
    <experiments>5</experiments>
</comment>
<comment type="interaction">
    <interactant intactId="EBI-355546">
        <id>P61289</id>
    </interactant>
    <interactant intactId="EBI-717201">
        <id>Q9UQ90</id>
        <label>SPG7</label>
    </interactant>
    <organismsDiffer>false</organismsDiffer>
    <experiments>3</experiments>
</comment>
<comment type="interaction">
    <interactant intactId="EBI-355546">
        <id>P61289</id>
    </interactant>
    <interactant intactId="EBI-10239991">
        <id>Q32MN6</id>
        <label>TBP</label>
    </interactant>
    <organismsDiffer>false</organismsDiffer>
    <experiments>3</experiments>
</comment>
<comment type="interaction">
    <interactant intactId="EBI-355546">
        <id>P61289</id>
    </interactant>
    <interactant intactId="EBI-745404">
        <id>Q9P2Z0</id>
        <label>THAP10</label>
    </interactant>
    <organismsDiffer>false</organismsDiffer>
    <experiments>3</experiments>
</comment>
<comment type="interaction">
    <interactant intactId="EBI-355546">
        <id>P61289</id>
    </interactant>
    <interactant intactId="EBI-752102">
        <id>Q8WVP5</id>
        <label>TNFAIP8L1</label>
    </interactant>
    <organismsDiffer>false</organismsDiffer>
    <experiments>6</experiments>
</comment>
<comment type="interaction">
    <interactant intactId="EBI-355546">
        <id>P61289</id>
    </interactant>
    <interactant intactId="EBI-366083">
        <id>P04637</id>
        <label>TP53</label>
    </interactant>
    <organismsDiffer>false</organismsDiffer>
    <experiments>7</experiments>
</comment>
<comment type="interaction">
    <interactant intactId="EBI-355546">
        <id>P61289</id>
    </interactant>
    <interactant intactId="EBI-2932492">
        <id>Q99757</id>
        <label>TXN2</label>
    </interactant>
    <organismsDiffer>false</organismsDiffer>
    <experiments>3</experiments>
</comment>
<comment type="interaction">
    <interactant intactId="EBI-355546">
        <id>P61289</id>
    </interactant>
    <interactant intactId="EBI-12032042">
        <id>Q64LD2-2</id>
        <label>WDR25</label>
    </interactant>
    <organismsDiffer>false</organismsDiffer>
    <experiments>3</experiments>
</comment>
<comment type="interaction">
    <interactant intactId="EBI-355546">
        <id>P61289</id>
    </interactant>
    <interactant intactId="EBI-597063">
        <id>Q8TBK6</id>
        <label>ZCCHC10</label>
    </interactant>
    <organismsDiffer>false</organismsDiffer>
    <experiments>7</experiments>
</comment>
<comment type="interaction">
    <interactant intactId="EBI-355546">
        <id>P61289</id>
    </interactant>
    <interactant intactId="EBI-25475856">
        <id>P0DTC9</id>
        <label>N</label>
    </interactant>
    <organismsDiffer>true</organismsDiffer>
    <experiments>3</experiments>
</comment>
<comment type="interaction">
    <interactant intactId="EBI-355546">
        <id>P61289</id>
    </interactant>
    <interactant intactId="EBI-779991">
        <id>P12504</id>
        <label>vif</label>
    </interactant>
    <organismsDiffer>true</organismsDiffer>
    <experiments>2</experiments>
</comment>
<comment type="interaction">
    <interactant intactId="EBI-355546">
        <id>P61289</id>
    </interactant>
    <interactant intactId="EBI-9636511">
        <id>O93077</id>
    </interactant>
    <organismsDiffer>true</organismsDiffer>
    <experiments>11</experiments>
</comment>
<comment type="subcellular location">
    <subcellularLocation>
        <location evidence="3 7">Nucleus</location>
    </subcellularLocation>
    <subcellularLocation>
        <location evidence="1">Cytoplasm</location>
    </subcellularLocation>
    <text evidence="1">Localizes to the cytoplasm during mitosis following nuclear envelope breakdown at this distinct stage of the cell cycle which allows its interaction with MAP3K3 kinase.</text>
</comment>
<comment type="alternative products">
    <event type="alternative splicing"/>
    <isoform>
        <id>P61289-1</id>
        <id>Q12920-1</id>
        <name>1</name>
        <sequence type="displayed"/>
    </isoform>
    <isoform>
        <id>P61289-2</id>
        <id>Q12920-2</id>
        <name>2</name>
        <sequence type="described" ref="VSP_004516"/>
    </isoform>
    <isoform>
        <id>P61289-3</id>
        <name>3</name>
        <sequence type="described" ref="VSP_055047"/>
    </isoform>
</comment>
<comment type="induction">
    <text evidence="7">Up-regulated in thyroid carcinoma cells.</text>
</comment>
<comment type="domain">
    <text evidence="4">The C-terminal sequences affect heptamer stability and proteasome affinity.</text>
</comment>
<comment type="PTM">
    <text evidence="2 12">Phosphorylated by MAP3K3 (By similarity). Phosphorylation at Ser-247 promotes its association with CCAR2.</text>
</comment>
<comment type="PTM">
    <text evidence="11 15">Acetylation at the major site Lys-195 is important for oligomerization and ability to degrade its target substrates. Deacetylated by SIRT1.</text>
</comment>
<comment type="similarity">
    <text evidence="17">Belongs to the PA28 family.</text>
</comment>
<feature type="initiator methionine" description="Removed" evidence="15 19">
    <location>
        <position position="1"/>
    </location>
</feature>
<feature type="chain" id="PRO_0000161789" description="Proteasome activator complex subunit 3">
    <location>
        <begin position="2"/>
        <end position="254"/>
    </location>
</feature>
<feature type="modified residue" description="N-acetylalanine" evidence="15 19">
    <location>
        <position position="2"/>
    </location>
</feature>
<feature type="modified residue" description="Phosphoserine" evidence="20">
    <location>
        <position position="17"/>
    </location>
</feature>
<feature type="modified residue" description="Phosphoserine" evidence="18">
    <location>
        <position position="24"/>
    </location>
</feature>
<feature type="modified residue" description="N6-acetyllysine; by P300/CBP" evidence="11">
    <location>
        <position position="195"/>
    </location>
</feature>
<feature type="modified residue" description="Phosphoserine; by CHEK2" evidence="12">
    <location>
        <position position="247"/>
    </location>
</feature>
<feature type="splice variant" id="VSP_055047" description="In isoform 3." evidence="17">
    <original>MASLLKVDQEVKL</original>
    <variation>MEKWILKKIKYLQSGGLSASYYSY</variation>
    <location>
        <begin position="1"/>
        <end position="13"/>
    </location>
</feature>
<feature type="splice variant" id="VSP_004516" description="In isoform 2." evidence="16">
    <original>T</original>
    <variation>TPSGKGPHICFDLQ</variation>
    <location>
        <position position="135"/>
    </location>
</feature>
<feature type="mutagenesis site" description="Assembles into less stable hexamers/heptamers and therefore impairs specificity of activation of trypsin-like subunits of the proteasome." evidence="6">
    <original>K</original>
    <variation>E</variation>
    <variation>D</variation>
    <variation>A</variation>
    <variation>C</variation>
    <variation>N</variation>
    <variation>Q</variation>
    <variation>H</variation>
    <variation>F</variation>
    <variation>S</variation>
    <variation>I</variation>
    <variation>P</variation>
    <location>
        <position position="188"/>
    </location>
</feature>
<feature type="sequence conflict" description="In Ref. 2; AAB60335." evidence="17" ref="2">
    <original>E</original>
    <variation>K</variation>
    <location>
        <position position="25"/>
    </location>
</feature>
<feature type="sequence conflict" description="In Ref. 10; AAA93227." evidence="17" ref="10">
    <original>E</original>
    <variation>K</variation>
    <location>
        <position position="94"/>
    </location>
</feature>
<feature type="helix" evidence="21">
    <location>
        <begin position="9"/>
        <end position="44"/>
    </location>
</feature>
<feature type="helix" evidence="21">
    <location>
        <begin position="48"/>
        <end position="50"/>
    </location>
</feature>
<feature type="turn" evidence="21">
    <location>
        <begin position="55"/>
        <end position="58"/>
    </location>
</feature>
<feature type="helix" evidence="21">
    <location>
        <begin position="113"/>
        <end position="141"/>
    </location>
</feature>
<feature type="helix" evidence="21">
    <location>
        <begin position="153"/>
        <end position="195"/>
    </location>
</feature>
<feature type="helix" evidence="21">
    <location>
        <begin position="201"/>
        <end position="237"/>
    </location>
</feature>
<feature type="helix" evidence="21">
    <location>
        <begin position="239"/>
        <end position="243"/>
    </location>
</feature>
<dbReference type="EMBL" id="U11292">
    <property type="protein sequence ID" value="AAB60335.1"/>
    <property type="molecule type" value="mRNA"/>
</dbReference>
<dbReference type="EMBL" id="BT019386">
    <property type="protein sequence ID" value="AAV38193.1"/>
    <property type="molecule type" value="mRNA"/>
</dbReference>
<dbReference type="EMBL" id="AK292618">
    <property type="protein sequence ID" value="BAF85307.1"/>
    <property type="molecule type" value="mRNA"/>
</dbReference>
<dbReference type="EMBL" id="AK074999">
    <property type="protein sequence ID" value="BAG52046.1"/>
    <property type="molecule type" value="mRNA"/>
</dbReference>
<dbReference type="EMBL" id="AC016889">
    <property type="status" value="NOT_ANNOTATED_CDS"/>
    <property type="molecule type" value="Genomic_DNA"/>
</dbReference>
<dbReference type="EMBL" id="CH471152">
    <property type="protein sequence ID" value="EAW60893.1"/>
    <property type="molecule type" value="Genomic_DNA"/>
</dbReference>
<dbReference type="EMBL" id="BC001423">
    <property type="protein sequence ID" value="AAH01423.1"/>
    <property type="molecule type" value="mRNA"/>
</dbReference>
<dbReference type="EMBL" id="BC002684">
    <property type="protein sequence ID" value="AAH02684.1"/>
    <property type="molecule type" value="mRNA"/>
</dbReference>
<dbReference type="EMBL" id="BC008020">
    <property type="protein sequence ID" value="AAH08020.1"/>
    <property type="molecule type" value="mRNA"/>
</dbReference>
<dbReference type="EMBL" id="U25756">
    <property type="protein sequence ID" value="AAA93227.1"/>
    <property type="molecule type" value="Genomic_DNA"/>
</dbReference>
<dbReference type="CCDS" id="CCDS11442.1">
    <molecule id="P61289-2"/>
</dbReference>
<dbReference type="CCDS" id="CCDS45689.1"/>
<dbReference type="CCDS" id="CCDS59290.1">
    <molecule id="P61289-3"/>
</dbReference>
<dbReference type="PIR" id="I38702">
    <property type="entry name" value="A60537"/>
</dbReference>
<dbReference type="RefSeq" id="NP_001253974.1">
    <molecule id="P61289-3"/>
    <property type="nucleotide sequence ID" value="NM_001267045.2"/>
</dbReference>
<dbReference type="RefSeq" id="NP_005780.2">
    <molecule id="P61289-1"/>
    <property type="nucleotide sequence ID" value="NM_005789.3"/>
</dbReference>
<dbReference type="RefSeq" id="NP_789839.1">
    <molecule id="P61289-2"/>
    <property type="nucleotide sequence ID" value="NM_176863.3"/>
</dbReference>
<dbReference type="RefSeq" id="XP_047291052.1">
    <molecule id="P61289-3"/>
    <property type="nucleotide sequence ID" value="XM_047435096.1"/>
</dbReference>
<dbReference type="RefSeq" id="XP_054170643.1">
    <molecule id="P61289-3"/>
    <property type="nucleotide sequence ID" value="XM_054314668.1"/>
</dbReference>
<dbReference type="PDB" id="7YQC">
    <property type="method" value="EM"/>
    <property type="resolution" value="2.82 A"/>
    <property type="chains" value="A/B/C/D/E/F/G=1-254"/>
</dbReference>
<dbReference type="PDB" id="7YQD">
    <property type="method" value="EM"/>
    <property type="resolution" value="3.40 A"/>
    <property type="chains" value="A/B/C/D/E/F/G=1-254"/>
</dbReference>
<dbReference type="PDBsum" id="7YQC"/>
<dbReference type="PDBsum" id="7YQD"/>
<dbReference type="EMDB" id="EMD-26379"/>
<dbReference type="EMDB" id="EMD-34023"/>
<dbReference type="EMDB" id="EMD-34024"/>
<dbReference type="SMR" id="P61289"/>
<dbReference type="BioGRID" id="115492">
    <property type="interactions" value="444"/>
</dbReference>
<dbReference type="ComplexPortal" id="CPX-9001">
    <property type="entry name" value="PA28-gamma single-capped 20S proteasome complex"/>
</dbReference>
<dbReference type="ComplexPortal" id="CPX-9022">
    <property type="entry name" value="PA28-gamma double-capped 20S proteasome complex"/>
</dbReference>
<dbReference type="ComplexPortal" id="CPX-9085">
    <property type="entry name" value="19S-20S-PA28-gamma hybrid proteasome complex"/>
</dbReference>
<dbReference type="CORUM" id="P61289"/>
<dbReference type="FunCoup" id="P61289">
    <property type="interactions" value="4531"/>
</dbReference>
<dbReference type="IntAct" id="P61289">
    <property type="interactions" value="234"/>
</dbReference>
<dbReference type="MINT" id="P61289"/>
<dbReference type="STRING" id="9606.ENSP00000293362"/>
<dbReference type="ChEMBL" id="CHEMBL4296023"/>
<dbReference type="GlyGen" id="P61289">
    <property type="glycosylation" value="3 sites, 1 O-linked glycan (1 site)"/>
</dbReference>
<dbReference type="iPTMnet" id="P61289"/>
<dbReference type="PhosphoSitePlus" id="P61289"/>
<dbReference type="SwissPalm" id="P61289"/>
<dbReference type="BioMuta" id="PSME3"/>
<dbReference type="DMDM" id="47117724"/>
<dbReference type="jPOST" id="P61289"/>
<dbReference type="MassIVE" id="P61289"/>
<dbReference type="PaxDb" id="9606-ENSP00000293362"/>
<dbReference type="PeptideAtlas" id="P61289"/>
<dbReference type="ProteomicsDB" id="57290"/>
<dbReference type="ProteomicsDB" id="57291">
    <molecule id="P61289-2"/>
</dbReference>
<dbReference type="Pumba" id="P61289"/>
<dbReference type="Antibodypedia" id="1736">
    <property type="antibodies" value="333 antibodies from 34 providers"/>
</dbReference>
<dbReference type="DNASU" id="10197"/>
<dbReference type="Ensembl" id="ENST00000293362.7">
    <molecule id="P61289-2"/>
    <property type="protein sequence ID" value="ENSP00000293362.1"/>
    <property type="gene ID" value="ENSG00000131467.12"/>
</dbReference>
<dbReference type="Ensembl" id="ENST00000441946.6">
    <molecule id="P61289-3"/>
    <property type="protein sequence ID" value="ENSP00000409487.2"/>
    <property type="gene ID" value="ENSG00000131467.12"/>
</dbReference>
<dbReference type="Ensembl" id="ENST00000590720.6">
    <molecule id="P61289-1"/>
    <property type="protein sequence ID" value="ENSP00000466794.1"/>
    <property type="gene ID" value="ENSG00000131467.12"/>
</dbReference>
<dbReference type="GeneID" id="10197"/>
<dbReference type="KEGG" id="hsa:10197"/>
<dbReference type="MANE-Select" id="ENST00000590720.6">
    <property type="protein sequence ID" value="ENSP00000466794.1"/>
    <property type="RefSeq nucleotide sequence ID" value="NM_005789.4"/>
    <property type="RefSeq protein sequence ID" value="NP_005780.2"/>
</dbReference>
<dbReference type="UCSC" id="uc002ibq.5">
    <property type="organism name" value="human"/>
</dbReference>
<dbReference type="AGR" id="HGNC:9570"/>
<dbReference type="CTD" id="10197"/>
<dbReference type="DisGeNET" id="10197"/>
<dbReference type="GeneCards" id="PSME3"/>
<dbReference type="HGNC" id="HGNC:9570">
    <property type="gene designation" value="PSME3"/>
</dbReference>
<dbReference type="HPA" id="ENSG00000131467">
    <property type="expression patterns" value="Low tissue specificity"/>
</dbReference>
<dbReference type="MIM" id="605129">
    <property type="type" value="gene"/>
</dbReference>
<dbReference type="neXtProt" id="NX_P61289"/>
<dbReference type="OpenTargets" id="ENSG00000131467"/>
<dbReference type="PharmGKB" id="PA33916"/>
<dbReference type="VEuPathDB" id="HostDB:ENSG00000131467"/>
<dbReference type="eggNOG" id="KOG4470">
    <property type="taxonomic scope" value="Eukaryota"/>
</dbReference>
<dbReference type="GeneTree" id="ENSGT00950000183098"/>
<dbReference type="InParanoid" id="P61289"/>
<dbReference type="OMA" id="PMFNERN"/>
<dbReference type="OrthoDB" id="6591885at2759"/>
<dbReference type="PAN-GO" id="P61289">
    <property type="GO annotations" value="6 GO annotations based on evolutionary models"/>
</dbReference>
<dbReference type="PhylomeDB" id="P61289"/>
<dbReference type="TreeFam" id="TF106236"/>
<dbReference type="PathwayCommons" id="P61289"/>
<dbReference type="Reactome" id="R-HSA-9907900">
    <property type="pathway name" value="Proteasome assembly"/>
</dbReference>
<dbReference type="SignaLink" id="P61289"/>
<dbReference type="SIGNOR" id="P61289"/>
<dbReference type="BioGRID-ORCS" id="10197">
    <property type="hits" value="89 hits in 1174 CRISPR screens"/>
</dbReference>
<dbReference type="CD-CODE" id="6F24707C">
    <property type="entry name" value="Cajal body"/>
</dbReference>
<dbReference type="ChiTaRS" id="PSME3">
    <property type="organism name" value="human"/>
</dbReference>
<dbReference type="GeneWiki" id="PSME3"/>
<dbReference type="GenomeRNAi" id="10197"/>
<dbReference type="Pharos" id="P61289">
    <property type="development level" value="Tbio"/>
</dbReference>
<dbReference type="PRO" id="PR:P61289"/>
<dbReference type="Proteomes" id="UP000005640">
    <property type="component" value="Chromosome 17"/>
</dbReference>
<dbReference type="RNAct" id="P61289">
    <property type="molecule type" value="protein"/>
</dbReference>
<dbReference type="Bgee" id="ENSG00000131467">
    <property type="expression patterns" value="Expressed in islet of Langerhans and 204 other cell types or tissues"/>
</dbReference>
<dbReference type="ExpressionAtlas" id="P61289">
    <property type="expression patterns" value="baseline and differential"/>
</dbReference>
<dbReference type="GO" id="GO:0036064">
    <property type="term" value="C:ciliary basal body"/>
    <property type="evidence" value="ECO:0000314"/>
    <property type="project" value="HPA"/>
</dbReference>
<dbReference type="GO" id="GO:0005929">
    <property type="term" value="C:cilium"/>
    <property type="evidence" value="ECO:0000314"/>
    <property type="project" value="HPA"/>
</dbReference>
<dbReference type="GO" id="GO:0005737">
    <property type="term" value="C:cytoplasm"/>
    <property type="evidence" value="ECO:0000318"/>
    <property type="project" value="GO_Central"/>
</dbReference>
<dbReference type="GO" id="GO:0005829">
    <property type="term" value="C:cytosol"/>
    <property type="evidence" value="ECO:0000314"/>
    <property type="project" value="HPA"/>
</dbReference>
<dbReference type="GO" id="GO:0016020">
    <property type="term" value="C:membrane"/>
    <property type="evidence" value="ECO:0007005"/>
    <property type="project" value="UniProtKB"/>
</dbReference>
<dbReference type="GO" id="GO:0005654">
    <property type="term" value="C:nucleoplasm"/>
    <property type="evidence" value="ECO:0000314"/>
    <property type="project" value="HPA"/>
</dbReference>
<dbReference type="GO" id="GO:0005634">
    <property type="term" value="C:nucleus"/>
    <property type="evidence" value="ECO:0007005"/>
    <property type="project" value="UniProtKB"/>
</dbReference>
<dbReference type="GO" id="GO:0008537">
    <property type="term" value="C:proteasome activator complex"/>
    <property type="evidence" value="ECO:0007669"/>
    <property type="project" value="InterPro"/>
</dbReference>
<dbReference type="GO" id="GO:0000502">
    <property type="term" value="C:proteasome complex"/>
    <property type="evidence" value="ECO:0000304"/>
    <property type="project" value="ProtInc"/>
</dbReference>
<dbReference type="GO" id="GO:0061133">
    <property type="term" value="F:endopeptidase activator activity"/>
    <property type="evidence" value="ECO:0000314"/>
    <property type="project" value="UniProtKB"/>
</dbReference>
<dbReference type="GO" id="GO:0042802">
    <property type="term" value="F:identical protein binding"/>
    <property type="evidence" value="ECO:0000353"/>
    <property type="project" value="IntAct"/>
</dbReference>
<dbReference type="GO" id="GO:0097371">
    <property type="term" value="F:MDM2/MDM4 family protein binding"/>
    <property type="evidence" value="ECO:0000314"/>
    <property type="project" value="UniProtKB"/>
</dbReference>
<dbReference type="GO" id="GO:0002039">
    <property type="term" value="F:p53 binding"/>
    <property type="evidence" value="ECO:0000314"/>
    <property type="project" value="UniProtKB"/>
</dbReference>
<dbReference type="GO" id="GO:0006915">
    <property type="term" value="P:apoptotic process"/>
    <property type="evidence" value="ECO:0007669"/>
    <property type="project" value="UniProtKB-KW"/>
</dbReference>
<dbReference type="GO" id="GO:2001237">
    <property type="term" value="P:negative regulation of extrinsic apoptotic signaling pathway"/>
    <property type="evidence" value="ECO:0000314"/>
    <property type="project" value="UniProtKB"/>
</dbReference>
<dbReference type="GO" id="GO:2000045">
    <property type="term" value="P:regulation of G1/S transition of mitotic cell cycle"/>
    <property type="evidence" value="ECO:0000318"/>
    <property type="project" value="GO_Central"/>
</dbReference>
<dbReference type="GO" id="GO:0061136">
    <property type="term" value="P:regulation of proteasomal protein catabolic process"/>
    <property type="evidence" value="ECO:0000314"/>
    <property type="project" value="UniProtKB"/>
</dbReference>
<dbReference type="FunFam" id="1.20.120.180:FF:000001">
    <property type="entry name" value="Proteasome activator complex subunit 3"/>
    <property type="match status" value="1"/>
</dbReference>
<dbReference type="FunFam" id="1.20.5.120:FF:000001">
    <property type="entry name" value="Proteasome activator complex subunit 3"/>
    <property type="match status" value="1"/>
</dbReference>
<dbReference type="Gene3D" id="1.20.120.180">
    <property type="entry name" value="Proteasome activator pa28, C-terminal domain"/>
    <property type="match status" value="1"/>
</dbReference>
<dbReference type="Gene3D" id="1.20.5.120">
    <property type="entry name" value="Proteasome activator pa28, N-terminal domain"/>
    <property type="match status" value="1"/>
</dbReference>
<dbReference type="InterPro" id="IPR003186">
    <property type="entry name" value="PA28_C"/>
</dbReference>
<dbReference type="InterPro" id="IPR036997">
    <property type="entry name" value="PA28_C_sf"/>
</dbReference>
<dbReference type="InterPro" id="IPR036996">
    <property type="entry name" value="PA28_N_sf"/>
</dbReference>
<dbReference type="InterPro" id="IPR009077">
    <property type="entry name" value="Proteasome_activ_PA28"/>
</dbReference>
<dbReference type="InterPro" id="IPR003185">
    <property type="entry name" value="Proteasome_activ_PA28_N"/>
</dbReference>
<dbReference type="InterPro" id="IPR036252">
    <property type="entry name" value="Proteasome_activ_sf"/>
</dbReference>
<dbReference type="PANTHER" id="PTHR10660:SF4">
    <property type="entry name" value="PROTEASOME ACTIVATOR COMPLEX SUBUNIT 3"/>
    <property type="match status" value="1"/>
</dbReference>
<dbReference type="PANTHER" id="PTHR10660">
    <property type="entry name" value="PROTEASOME REGULATOR PA28"/>
    <property type="match status" value="1"/>
</dbReference>
<dbReference type="Pfam" id="PF02252">
    <property type="entry name" value="PA28_C"/>
    <property type="match status" value="1"/>
</dbReference>
<dbReference type="Pfam" id="PF02251">
    <property type="entry name" value="PA28_N"/>
    <property type="match status" value="1"/>
</dbReference>
<dbReference type="SUPFAM" id="SSF47216">
    <property type="entry name" value="Proteasome activator"/>
    <property type="match status" value="1"/>
</dbReference>
<organism>
    <name type="scientific">Homo sapiens</name>
    <name type="common">Human</name>
    <dbReference type="NCBI Taxonomy" id="9606"/>
    <lineage>
        <taxon>Eukaryota</taxon>
        <taxon>Metazoa</taxon>
        <taxon>Chordata</taxon>
        <taxon>Craniata</taxon>
        <taxon>Vertebrata</taxon>
        <taxon>Euteleostomi</taxon>
        <taxon>Mammalia</taxon>
        <taxon>Eutheria</taxon>
        <taxon>Euarchontoglires</taxon>
        <taxon>Primates</taxon>
        <taxon>Haplorrhini</taxon>
        <taxon>Catarrhini</taxon>
        <taxon>Hominidae</taxon>
        <taxon>Homo</taxon>
    </lineage>
</organism>
<sequence>MASLLKVDQEVKLKVDSFRERITSEAEDLVANFFPKKLLELDSFLKEPILNIHDLTQIHSDMNLPVPDPILLTNSHDGLDGPTYKKRRLDECEEAFQGTKVFVMPNGMLKSNQQLVDIIEKVKPEIRLLIEKCNTVKMWVQLLIPRIEDGNNFGVSIQEETVAELRTVESEAASYLDQISRYYITRAKLVSKIAKYPHVEDYRRTVTEIDEKEYISLRLIISELRNQYVTLHDMILKNIEKIKRPRSSNAETLY</sequence>
<gene>
    <name type="primary">PSME3</name>
</gene>
<accession>P61289</accession>
<accession>A8K9A3</accession>
<accession>O35563</accession>
<accession>P97373</accession>
<accession>Q12920</accession>
<accession>Q13172</accession>
<accession>Q9BQD9</accession>
<protein>
    <recommendedName>
        <fullName>Proteasome activator complex subunit 3</fullName>
    </recommendedName>
    <alternativeName>
        <fullName>11S regulator complex subunit gamma</fullName>
        <shortName>REG-gamma</shortName>
    </alternativeName>
    <alternativeName>
        <fullName>Activator of multicatalytic protease subunit 3</fullName>
    </alternativeName>
    <alternativeName>
        <fullName>Ki nuclear autoantigen</fullName>
    </alternativeName>
    <alternativeName>
        <fullName>Proteasome activator 28 subunit gamma</fullName>
        <shortName>PA28g</shortName>
        <shortName>PA28gamma</shortName>
    </alternativeName>
</protein>
<evidence type="ECO:0000250" key="1"/>
<evidence type="ECO:0000250" key="2">
    <source>
        <dbReference type="UniProtKB" id="P61290"/>
    </source>
</evidence>
<evidence type="ECO:0000269" key="3">
    <source>
    </source>
</evidence>
<evidence type="ECO:0000269" key="4">
    <source>
    </source>
</evidence>
<evidence type="ECO:0000269" key="5">
    <source>
    </source>
</evidence>
<evidence type="ECO:0000269" key="6">
    <source>
    </source>
</evidence>
<evidence type="ECO:0000269" key="7">
    <source>
    </source>
</evidence>
<evidence type="ECO:0000269" key="8">
    <source>
    </source>
</evidence>
<evidence type="ECO:0000269" key="9">
    <source>
    </source>
</evidence>
<evidence type="ECO:0000269" key="10">
    <source>
    </source>
</evidence>
<evidence type="ECO:0000269" key="11">
    <source>
    </source>
</evidence>
<evidence type="ECO:0000269" key="12">
    <source>
    </source>
</evidence>
<evidence type="ECO:0000269" key="13">
    <source>
    </source>
</evidence>
<evidence type="ECO:0000269" key="14">
    <source>
    </source>
</evidence>
<evidence type="ECO:0000269" key="15">
    <source ref="9"/>
</evidence>
<evidence type="ECO:0000303" key="16">
    <source>
    </source>
</evidence>
<evidence type="ECO:0000305" key="17"/>
<evidence type="ECO:0007744" key="18">
    <source>
    </source>
</evidence>
<evidence type="ECO:0007744" key="19">
    <source>
    </source>
</evidence>
<evidence type="ECO:0007744" key="20">
    <source>
    </source>
</evidence>
<evidence type="ECO:0007829" key="21">
    <source>
        <dbReference type="PDB" id="7YQC"/>
    </source>
</evidence>
<proteinExistence type="evidence at protein level"/>
<name>PSME3_HUMAN</name>
<reference key="1">
    <citation type="journal article" date="1990" name="Clin. Exp. Immunol.">
        <title>Cloning and nucleotide sequence of cDNA for Ki antigen, a highly conserved nuclear protein detected with sera from patients with systemic lupus erythematosus.</title>
        <authorList>
            <person name="Nikaido T."/>
            <person name="Shimada K."/>
            <person name="Shibata M."/>
            <person name="Hata M."/>
            <person name="Sakamoto M."/>
            <person name="Takasaki Y."/>
            <person name="Sato C."/>
            <person name="Takahashi T."/>
            <person name="Nishida Y."/>
        </authorList>
    </citation>
    <scope>NUCLEOTIDE SEQUENCE [MRNA] (ISOFORM 1)</scope>
</reference>
<reference key="2">
    <citation type="journal article" date="1994" name="Nat. Genet.">
        <title>A physical map and candidate genes in the BRCA1 region on chromosome 17q12-21.</title>
        <authorList>
            <person name="Albertsen H.M."/>
            <person name="Smith S.A."/>
            <person name="Mazoyer S."/>
            <person name="Fujimoto E."/>
            <person name="Stevens J."/>
            <person name="Williams B."/>
            <person name="Rodriguez P."/>
            <person name="Cropp C.S."/>
            <person name="Slijepcevic P."/>
            <person name="Carlson M."/>
            <person name="Robertson M."/>
            <person name="Bradley P."/>
            <person name="Lawrence E."/>
            <person name="Harrington T."/>
            <person name="Sheng Z.M."/>
            <person name="Hoopes R."/>
            <person name="Sternberg N."/>
            <person name="Brothman A."/>
            <person name="Callahan R."/>
            <person name="Ponder B.A.J."/>
            <person name="White R."/>
        </authorList>
    </citation>
    <scope>NUCLEOTIDE SEQUENCE [MRNA] (ISOFORM 2)</scope>
    <source>
        <tissue>B-cell</tissue>
        <tissue>Fetal brain</tissue>
    </source>
</reference>
<reference key="3">
    <citation type="submission" date="2004-10" db="EMBL/GenBank/DDBJ databases">
        <title>Cloning of human full-length CDSs in BD Creator(TM) system donor vector.</title>
        <authorList>
            <person name="Kalnine N."/>
            <person name="Chen X."/>
            <person name="Rolfs A."/>
            <person name="Halleck A."/>
            <person name="Hines L."/>
            <person name="Eisenstein S."/>
            <person name="Koundinya M."/>
            <person name="Raphael J."/>
            <person name="Moreira D."/>
            <person name="Kelley T."/>
            <person name="LaBaer J."/>
            <person name="Lin Y."/>
            <person name="Phelan M."/>
            <person name="Farmer A."/>
        </authorList>
    </citation>
    <scope>NUCLEOTIDE SEQUENCE [LARGE SCALE MRNA] (ISOFORM 1)</scope>
</reference>
<reference key="4">
    <citation type="journal article" date="2004" name="Nat. Genet.">
        <title>Complete sequencing and characterization of 21,243 full-length human cDNAs.</title>
        <authorList>
            <person name="Ota T."/>
            <person name="Suzuki Y."/>
            <person name="Nishikawa T."/>
            <person name="Otsuki T."/>
            <person name="Sugiyama T."/>
            <person name="Irie R."/>
            <person name="Wakamatsu A."/>
            <person name="Hayashi K."/>
            <person name="Sato H."/>
            <person name="Nagai K."/>
            <person name="Kimura K."/>
            <person name="Makita H."/>
            <person name="Sekine M."/>
            <person name="Obayashi M."/>
            <person name="Nishi T."/>
            <person name="Shibahara T."/>
            <person name="Tanaka T."/>
            <person name="Ishii S."/>
            <person name="Yamamoto J."/>
            <person name="Saito K."/>
            <person name="Kawai Y."/>
            <person name="Isono Y."/>
            <person name="Nakamura Y."/>
            <person name="Nagahari K."/>
            <person name="Murakami K."/>
            <person name="Yasuda T."/>
            <person name="Iwayanagi T."/>
            <person name="Wagatsuma M."/>
            <person name="Shiratori A."/>
            <person name="Sudo H."/>
            <person name="Hosoiri T."/>
            <person name="Kaku Y."/>
            <person name="Kodaira H."/>
            <person name="Kondo H."/>
            <person name="Sugawara M."/>
            <person name="Takahashi M."/>
            <person name="Kanda K."/>
            <person name="Yokoi T."/>
            <person name="Furuya T."/>
            <person name="Kikkawa E."/>
            <person name="Omura Y."/>
            <person name="Abe K."/>
            <person name="Kamihara K."/>
            <person name="Katsuta N."/>
            <person name="Sato K."/>
            <person name="Tanikawa M."/>
            <person name="Yamazaki M."/>
            <person name="Ninomiya K."/>
            <person name="Ishibashi T."/>
            <person name="Yamashita H."/>
            <person name="Murakawa K."/>
            <person name="Fujimori K."/>
            <person name="Tanai H."/>
            <person name="Kimata M."/>
            <person name="Watanabe M."/>
            <person name="Hiraoka S."/>
            <person name="Chiba Y."/>
            <person name="Ishida S."/>
            <person name="Ono Y."/>
            <person name="Takiguchi S."/>
            <person name="Watanabe S."/>
            <person name="Yosida M."/>
            <person name="Hotuta T."/>
            <person name="Kusano J."/>
            <person name="Kanehori K."/>
            <person name="Takahashi-Fujii A."/>
            <person name="Hara H."/>
            <person name="Tanase T.-O."/>
            <person name="Nomura Y."/>
            <person name="Togiya S."/>
            <person name="Komai F."/>
            <person name="Hara R."/>
            <person name="Takeuchi K."/>
            <person name="Arita M."/>
            <person name="Imose N."/>
            <person name="Musashino K."/>
            <person name="Yuuki H."/>
            <person name="Oshima A."/>
            <person name="Sasaki N."/>
            <person name="Aotsuka S."/>
            <person name="Yoshikawa Y."/>
            <person name="Matsunawa H."/>
            <person name="Ichihara T."/>
            <person name="Shiohata N."/>
            <person name="Sano S."/>
            <person name="Moriya S."/>
            <person name="Momiyama H."/>
            <person name="Satoh N."/>
            <person name="Takami S."/>
            <person name="Terashima Y."/>
            <person name="Suzuki O."/>
            <person name="Nakagawa S."/>
            <person name="Senoh A."/>
            <person name="Mizoguchi H."/>
            <person name="Goto Y."/>
            <person name="Shimizu F."/>
            <person name="Wakebe H."/>
            <person name="Hishigaki H."/>
            <person name="Watanabe T."/>
            <person name="Sugiyama A."/>
            <person name="Takemoto M."/>
            <person name="Kawakami B."/>
            <person name="Yamazaki M."/>
            <person name="Watanabe K."/>
            <person name="Kumagai A."/>
            <person name="Itakura S."/>
            <person name="Fukuzumi Y."/>
            <person name="Fujimori Y."/>
            <person name="Komiyama M."/>
            <person name="Tashiro H."/>
            <person name="Tanigami A."/>
            <person name="Fujiwara T."/>
            <person name="Ono T."/>
            <person name="Yamada K."/>
            <person name="Fujii Y."/>
            <person name="Ozaki K."/>
            <person name="Hirao M."/>
            <person name="Ohmori Y."/>
            <person name="Kawabata A."/>
            <person name="Hikiji T."/>
            <person name="Kobatake N."/>
            <person name="Inagaki H."/>
            <person name="Ikema Y."/>
            <person name="Okamoto S."/>
            <person name="Okitani R."/>
            <person name="Kawakami T."/>
            <person name="Noguchi S."/>
            <person name="Itoh T."/>
            <person name="Shigeta K."/>
            <person name="Senba T."/>
            <person name="Matsumura K."/>
            <person name="Nakajima Y."/>
            <person name="Mizuno T."/>
            <person name="Morinaga M."/>
            <person name="Sasaki M."/>
            <person name="Togashi T."/>
            <person name="Oyama M."/>
            <person name="Hata H."/>
            <person name="Watanabe M."/>
            <person name="Komatsu T."/>
            <person name="Mizushima-Sugano J."/>
            <person name="Satoh T."/>
            <person name="Shirai Y."/>
            <person name="Takahashi Y."/>
            <person name="Nakagawa K."/>
            <person name="Okumura K."/>
            <person name="Nagase T."/>
            <person name="Nomura N."/>
            <person name="Kikuchi H."/>
            <person name="Masuho Y."/>
            <person name="Yamashita R."/>
            <person name="Nakai K."/>
            <person name="Yada T."/>
            <person name="Nakamura Y."/>
            <person name="Ohara O."/>
            <person name="Isogai T."/>
            <person name="Sugano S."/>
        </authorList>
    </citation>
    <scope>NUCLEOTIDE SEQUENCE [LARGE SCALE MRNA] (ISOFORM 1)</scope>
    <source>
        <tissue>Thymus</tissue>
    </source>
</reference>
<reference key="5">
    <citation type="journal article" date="2005" name="DNA Res.">
        <title>Signal sequence and keyword trap in silico for selection of full-length human cDNAs encoding secretion or membrane proteins from oligo-capped cDNA libraries.</title>
        <authorList>
            <person name="Otsuki T."/>
            <person name="Ota T."/>
            <person name="Nishikawa T."/>
            <person name="Hayashi K."/>
            <person name="Suzuki Y."/>
            <person name="Yamamoto J."/>
            <person name="Wakamatsu A."/>
            <person name="Kimura K."/>
            <person name="Sakamoto K."/>
            <person name="Hatano N."/>
            <person name="Kawai Y."/>
            <person name="Ishii S."/>
            <person name="Saito K."/>
            <person name="Kojima S."/>
            <person name="Sugiyama T."/>
            <person name="Ono T."/>
            <person name="Okano K."/>
            <person name="Yoshikawa Y."/>
            <person name="Aotsuka S."/>
            <person name="Sasaki N."/>
            <person name="Hattori A."/>
            <person name="Okumura K."/>
            <person name="Nagai K."/>
            <person name="Sugano S."/>
            <person name="Isogai T."/>
        </authorList>
    </citation>
    <scope>NUCLEOTIDE SEQUENCE [LARGE SCALE MRNA] (ISOFORM 1)</scope>
</reference>
<reference key="6">
    <citation type="journal article" date="2006" name="Nature">
        <title>DNA sequence of human chromosome 17 and analysis of rearrangement in the human lineage.</title>
        <authorList>
            <person name="Zody M.C."/>
            <person name="Garber M."/>
            <person name="Adams D.J."/>
            <person name="Sharpe T."/>
            <person name="Harrow J."/>
            <person name="Lupski J.R."/>
            <person name="Nicholson C."/>
            <person name="Searle S.M."/>
            <person name="Wilming L."/>
            <person name="Young S.K."/>
            <person name="Abouelleil A."/>
            <person name="Allen N.R."/>
            <person name="Bi W."/>
            <person name="Bloom T."/>
            <person name="Borowsky M.L."/>
            <person name="Bugalter B.E."/>
            <person name="Butler J."/>
            <person name="Chang J.L."/>
            <person name="Chen C.-K."/>
            <person name="Cook A."/>
            <person name="Corum B."/>
            <person name="Cuomo C.A."/>
            <person name="de Jong P.J."/>
            <person name="DeCaprio D."/>
            <person name="Dewar K."/>
            <person name="FitzGerald M."/>
            <person name="Gilbert J."/>
            <person name="Gibson R."/>
            <person name="Gnerre S."/>
            <person name="Goldstein S."/>
            <person name="Grafham D.V."/>
            <person name="Grocock R."/>
            <person name="Hafez N."/>
            <person name="Hagopian D.S."/>
            <person name="Hart E."/>
            <person name="Norman C.H."/>
            <person name="Humphray S."/>
            <person name="Jaffe D.B."/>
            <person name="Jones M."/>
            <person name="Kamal M."/>
            <person name="Khodiyar V.K."/>
            <person name="LaButti K."/>
            <person name="Laird G."/>
            <person name="Lehoczky J."/>
            <person name="Liu X."/>
            <person name="Lokyitsang T."/>
            <person name="Loveland J."/>
            <person name="Lui A."/>
            <person name="Macdonald P."/>
            <person name="Major J.E."/>
            <person name="Matthews L."/>
            <person name="Mauceli E."/>
            <person name="McCarroll S.A."/>
            <person name="Mihalev A.H."/>
            <person name="Mudge J."/>
            <person name="Nguyen C."/>
            <person name="Nicol R."/>
            <person name="O'Leary S.B."/>
            <person name="Osoegawa K."/>
            <person name="Schwartz D.C."/>
            <person name="Shaw-Smith C."/>
            <person name="Stankiewicz P."/>
            <person name="Steward C."/>
            <person name="Swarbreck D."/>
            <person name="Venkataraman V."/>
            <person name="Whittaker C.A."/>
            <person name="Yang X."/>
            <person name="Zimmer A.R."/>
            <person name="Bradley A."/>
            <person name="Hubbard T."/>
            <person name="Birren B.W."/>
            <person name="Rogers J."/>
            <person name="Lander E.S."/>
            <person name="Nusbaum C."/>
        </authorList>
    </citation>
    <scope>NUCLEOTIDE SEQUENCE [LARGE SCALE GENOMIC DNA]</scope>
</reference>
<reference key="7">
    <citation type="submission" date="2005-07" db="EMBL/GenBank/DDBJ databases">
        <authorList>
            <person name="Mural R.J."/>
            <person name="Istrail S."/>
            <person name="Sutton G.G."/>
            <person name="Florea L."/>
            <person name="Halpern A.L."/>
            <person name="Mobarry C.M."/>
            <person name="Lippert R."/>
            <person name="Walenz B."/>
            <person name="Shatkay H."/>
            <person name="Dew I."/>
            <person name="Miller J.R."/>
            <person name="Flanigan M.J."/>
            <person name="Edwards N.J."/>
            <person name="Bolanos R."/>
            <person name="Fasulo D."/>
            <person name="Halldorsson B.V."/>
            <person name="Hannenhalli S."/>
            <person name="Turner R."/>
            <person name="Yooseph S."/>
            <person name="Lu F."/>
            <person name="Nusskern D.R."/>
            <person name="Shue B.C."/>
            <person name="Zheng X.H."/>
            <person name="Zhong F."/>
            <person name="Delcher A.L."/>
            <person name="Huson D.H."/>
            <person name="Kravitz S.A."/>
            <person name="Mouchard L."/>
            <person name="Reinert K."/>
            <person name="Remington K.A."/>
            <person name="Clark A.G."/>
            <person name="Waterman M.S."/>
            <person name="Eichler E.E."/>
            <person name="Adams M.D."/>
            <person name="Hunkapiller M.W."/>
            <person name="Myers E.W."/>
            <person name="Venter J.C."/>
        </authorList>
    </citation>
    <scope>NUCLEOTIDE SEQUENCE [LARGE SCALE GENOMIC DNA]</scope>
</reference>
<reference key="8">
    <citation type="journal article" date="2004" name="Genome Res.">
        <title>The status, quality, and expansion of the NIH full-length cDNA project: the Mammalian Gene Collection (MGC).</title>
        <authorList>
            <consortium name="The MGC Project Team"/>
        </authorList>
    </citation>
    <scope>NUCLEOTIDE SEQUENCE [LARGE SCALE MRNA] (ISOFORM 1)</scope>
    <source>
        <tissue>Lung</tissue>
        <tissue>Ovary</tissue>
        <tissue>Placenta</tissue>
    </source>
</reference>
<reference key="9">
    <citation type="submission" date="2009-02" db="UniProtKB">
        <authorList>
            <person name="Bienvenut W.V."/>
            <person name="Ramsay A."/>
            <person name="Leung H.Y."/>
        </authorList>
    </citation>
    <scope>PROTEIN SEQUENCE OF 2-12 AND 111-121</scope>
    <scope>CLEAVAGE OF INITIATOR METHIONINE</scope>
    <scope>ACETYLATION AT ALA-2</scope>
    <scope>IDENTIFICATION BY MASS SPECTROMETRY</scope>
    <source>
        <tissue>Embryonic kidney</tissue>
    </source>
</reference>
<reference key="10">
    <citation type="journal article" date="1994" name="Science">
        <title>A strong candidate for the breast and ovarian cancer susceptibility gene BRCA1.</title>
        <authorList>
            <person name="Miki Y."/>
            <person name="Swensen J."/>
            <person name="Shattuck-Eidens D."/>
            <person name="Futreal P.A."/>
            <person name="Harshman K."/>
            <person name="Tavtigian S."/>
            <person name="Liu Q."/>
            <person name="Cochran C."/>
            <person name="Bennett L.M."/>
            <person name="Ding W."/>
            <person name="Bell R."/>
            <person name="Rosenthal J."/>
            <person name="Hussey C."/>
            <person name="Tran T."/>
            <person name="McClure M."/>
            <person name="Frye C."/>
            <person name="Hattier T."/>
            <person name="Phelps R."/>
            <person name="Haugen-Strano A."/>
            <person name="Katcher H."/>
            <person name="Yakumo K."/>
            <person name="Gholami Z."/>
            <person name="Shaffer D."/>
            <person name="Stone S."/>
            <person name="Bayer S."/>
            <person name="Wray C."/>
            <person name="Bogden R."/>
            <person name="Dayananth P."/>
            <person name="Ward J."/>
            <person name="Tonin P."/>
            <person name="Narod S."/>
            <person name="Bristow P.K."/>
            <person name="Norris F.H."/>
            <person name="Helvering L."/>
            <person name="Morrison P."/>
            <person name="Rosteck P."/>
            <person name="Lai M."/>
            <person name="Barrett J.C."/>
            <person name="Lewis C."/>
            <person name="Neuhausen S."/>
            <person name="Cannon-Albright L."/>
            <person name="Godlgar D."/>
            <person name="Wiseman R."/>
            <person name="Kamb A."/>
            <person name="Skolnick M.H."/>
        </authorList>
    </citation>
    <scope>NUCLEOTIDE SEQUENCE [GENOMIC DNA] OF 82-135</scope>
    <source>
        <tissue>Ovary</tissue>
    </source>
</reference>
<reference key="11">
    <citation type="journal article" date="1997" name="J. Biol. Chem.">
        <title>Characterization of recombinant REGalpha, REGbeta, and REGgamma proteasome activators.</title>
        <authorList>
            <person name="Realini C."/>
            <person name="Jensen C.C."/>
            <person name="Zhang Z."/>
            <person name="Johnston S.C."/>
            <person name="Knowlton J.R."/>
            <person name="Hill C.P."/>
            <person name="Rechsteiner M."/>
        </authorList>
    </citation>
    <scope>FUNCTION</scope>
    <scope>SUBUNIT</scope>
    <scope>INTERACTION WITH THE PROTEASOME</scope>
    <scope>CALCIUM-BINDING</scope>
</reference>
<reference key="12">
    <citation type="journal article" date="2000" name="Arch. Biochem. Biophys.">
        <title>Properties of the nuclear proteasome activator PA28gamma (REGgamma).</title>
        <authorList>
            <person name="Wilk S."/>
            <person name="Chen W.-E."/>
            <person name="Magnusson R.P."/>
        </authorList>
    </citation>
    <scope>FUNCTION</scope>
    <scope>SUBUNIT</scope>
</reference>
<reference key="13">
    <citation type="journal article" date="2000" name="Biochem. J.">
        <title>Subcellular localization of proteasomes and their regulatory complexes in mammalian cells.</title>
        <authorList>
            <person name="Brooks P."/>
            <person name="Fuertes G."/>
            <person name="Murray R.Z."/>
            <person name="Bose S."/>
            <person name="Knecht E."/>
            <person name="Rechsteiner M.C."/>
            <person name="Hendil K.B."/>
            <person name="Tanaka K."/>
            <person name="Dyson J."/>
            <person name="Rivett J."/>
        </authorList>
    </citation>
    <scope>SUBCELLULAR LOCATION</scope>
</reference>
<reference key="14">
    <citation type="journal article" date="2000" name="J. Mol. Biol.">
        <title>The proteasome activator 11 S REG or PA28: chimeras implicate carboxyl-terminal sequences in oligomerization and proteasome binding but not in the activation of specific proteasome catalytic subunits.</title>
        <authorList>
            <person name="Li J."/>
            <person name="Gao X."/>
            <person name="Joss L."/>
            <person name="Rechsteiner M."/>
        </authorList>
    </citation>
    <scope>FUNCTION</scope>
    <scope>DOMAIN</scope>
    <scope>INTERACTION WITH THE PROTEASOME</scope>
    <scope>SUBUNIT</scope>
</reference>
<reference key="15">
    <citation type="journal article" date="2007" name="Biochemistry">
        <title>Mass spectrometric characterization of the affinity-purified human 26S proteasome complex.</title>
        <authorList>
            <person name="Wang X."/>
            <person name="Chen C.-F."/>
            <person name="Baker P.R."/>
            <person name="Chen P.-L."/>
            <person name="Kaiser P."/>
            <person name="Huang L."/>
        </authorList>
    </citation>
    <scope>IDENTIFICATION BY MASS SPECTROMETRY [LARGE SCALE ANALYSIS]</scope>
    <source>
        <tissue>Embryonic kidney</tissue>
    </source>
</reference>
<reference key="16">
    <citation type="journal article" date="2008" name="Proc. Natl. Acad. Sci. U.S.A.">
        <title>A quantitative atlas of mitotic phosphorylation.</title>
        <authorList>
            <person name="Dephoure N."/>
            <person name="Zhou C."/>
            <person name="Villen J."/>
            <person name="Beausoleil S.A."/>
            <person name="Bakalarski C.E."/>
            <person name="Elledge S.J."/>
            <person name="Gygi S.P."/>
        </authorList>
    </citation>
    <scope>PHOSPHORYLATION [LARGE SCALE ANALYSIS] AT SER-24</scope>
    <scope>IDENTIFICATION BY MASS SPECTROMETRY [LARGE SCALE ANALYSIS]</scope>
    <source>
        <tissue>Cervix carcinoma</tissue>
    </source>
</reference>
<reference key="17">
    <citation type="journal article" date="2009" name="Sci. Signal.">
        <title>Quantitative phosphoproteomic analysis of T cell receptor signaling reveals system-wide modulation of protein-protein interactions.</title>
        <authorList>
            <person name="Mayya V."/>
            <person name="Lundgren D.H."/>
            <person name="Hwang S.-I."/>
            <person name="Rezaul K."/>
            <person name="Wu L."/>
            <person name="Eng J.K."/>
            <person name="Rodionov V."/>
            <person name="Han D.K."/>
        </authorList>
    </citation>
    <scope>IDENTIFICATION BY MASS SPECTROMETRY [LARGE SCALE ANALYSIS]</scope>
    <source>
        <tissue>Leukemic T-cell</tissue>
    </source>
</reference>
<reference key="18">
    <citation type="journal article" date="2011" name="BMC Syst. Biol.">
        <title>Initial characterization of the human central proteome.</title>
        <authorList>
            <person name="Burkard T.R."/>
            <person name="Planyavsky M."/>
            <person name="Kaupe I."/>
            <person name="Breitwieser F.P."/>
            <person name="Buerckstuemmer T."/>
            <person name="Bennett K.L."/>
            <person name="Superti-Furga G."/>
            <person name="Colinge J."/>
        </authorList>
    </citation>
    <scope>IDENTIFICATION BY MASS SPECTROMETRY [LARGE SCALE ANALYSIS]</scope>
</reference>
<reference key="19">
    <citation type="journal article" date="2011" name="Sci. Signal.">
        <title>System-wide temporal characterization of the proteome and phosphoproteome of human embryonic stem cell differentiation.</title>
        <authorList>
            <person name="Rigbolt K.T."/>
            <person name="Prokhorova T.A."/>
            <person name="Akimov V."/>
            <person name="Henningsen J."/>
            <person name="Johansen P.T."/>
            <person name="Kratchmarova I."/>
            <person name="Kassem M."/>
            <person name="Mann M."/>
            <person name="Olsen J.V."/>
            <person name="Blagoev B."/>
        </authorList>
    </citation>
    <scope>IDENTIFICATION BY MASS SPECTROMETRY [LARGE SCALE ANALYSIS]</scope>
</reference>
<reference key="20">
    <citation type="journal article" date="2012" name="Proc. Natl. Acad. Sci. U.S.A.">
        <title>N-terminal acetylome analyses and functional insights of the N-terminal acetyltransferase NatB.</title>
        <authorList>
            <person name="Van Damme P."/>
            <person name="Lasa M."/>
            <person name="Polevoda B."/>
            <person name="Gazquez C."/>
            <person name="Elosegui-Artola A."/>
            <person name="Kim D.S."/>
            <person name="De Juan-Pardo E."/>
            <person name="Demeyer K."/>
            <person name="Hole K."/>
            <person name="Larrea E."/>
            <person name="Timmerman E."/>
            <person name="Prieto J."/>
            <person name="Arnesen T."/>
            <person name="Sherman F."/>
            <person name="Gevaert K."/>
            <person name="Aldabe R."/>
        </authorList>
    </citation>
    <scope>ACETYLATION [LARGE SCALE ANALYSIS] AT ALA-2</scope>
    <scope>CLEAVAGE OF INITIATOR METHIONINE [LARGE SCALE ANALYSIS]</scope>
    <scope>IDENTIFICATION BY MASS SPECTROMETRY [LARGE SCALE ANALYSIS]</scope>
</reference>
<reference key="21">
    <citation type="journal article" date="2013" name="J. Biol. Chem.">
        <title>Site-specific acetylation of the proteasome activator REGgamma directs its heptameric structure and functions.</title>
        <authorList>
            <person name="Liu J."/>
            <person name="Wang Y."/>
            <person name="Li L."/>
            <person name="Zhou L."/>
            <person name="Wei H."/>
            <person name="Zhou Q."/>
            <person name="Liu J."/>
            <person name="Wang W."/>
            <person name="Ji L."/>
            <person name="Shan P."/>
            <person name="Wang Y."/>
            <person name="Yang Y."/>
            <person name="Jung S.Y."/>
            <person name="Zhang P."/>
            <person name="Wang C."/>
            <person name="Long W."/>
            <person name="Zhang B."/>
            <person name="Li X."/>
        </authorList>
    </citation>
    <scope>ACETYLATION AT LYS-195</scope>
    <scope>SUBUNIT</scope>
</reference>
<reference key="22">
    <citation type="journal article" date="2013" name="J. Proteome Res.">
        <title>Toward a comprehensive characterization of a human cancer cell phosphoproteome.</title>
        <authorList>
            <person name="Zhou H."/>
            <person name="Di Palma S."/>
            <person name="Preisinger C."/>
            <person name="Peng M."/>
            <person name="Polat A.N."/>
            <person name="Heck A.J."/>
            <person name="Mohammed S."/>
        </authorList>
    </citation>
    <scope>PHOSPHORYLATION [LARGE SCALE ANALYSIS] AT SER-17</scope>
    <scope>IDENTIFICATION BY MASS SPECTROMETRY [LARGE SCALE ANALYSIS]</scope>
    <source>
        <tissue>Cervix carcinoma</tissue>
        <tissue>Erythroleukemia</tissue>
    </source>
</reference>
<reference key="23">
    <citation type="journal article" date="2014" name="Nucleic Acids Res.">
        <title>Chk2 and REGgamma-dependent DBC1 regulation in DNA damage induced apoptosis.</title>
        <authorList>
            <person name="Magni M."/>
            <person name="Ruscica V."/>
            <person name="Buscemi G."/>
            <person name="Kim J.E."/>
            <person name="Nachimuthu B.T."/>
            <person name="Fontanella E."/>
            <person name="Delia D."/>
            <person name="Zannini L."/>
        </authorList>
    </citation>
    <scope>FUNCTION</scope>
    <scope>PHOSPHORYLATION AT SER-247</scope>
    <scope>INTERACTION WITH CCAR2</scope>
</reference>
<reference key="24">
    <citation type="journal article" date="2001" name="EMBO J.">
        <title>Lysine 188 substitutions convert the pattern of proteasome activation by REGgamma to that of REGs alpha and beta.</title>
        <authorList>
            <person name="Li J."/>
            <person name="Gao X."/>
            <person name="Ortega J."/>
            <person name="Nazif T."/>
            <person name="Joss L."/>
            <person name="Bogyo M."/>
            <person name="Steven A.C."/>
            <person name="Rechsteiner M."/>
        </authorList>
    </citation>
    <scope>ELECTRON MICROSCOPY</scope>
    <scope>SUBUNIT</scope>
    <scope>FUNCTION</scope>
    <scope>MUTAGENESIS OF LYS-188</scope>
</reference>
<reference key="25">
    <citation type="journal article" date="2003" name="J. Clin. Endocrinol. Metab.">
        <title>Abnormally high expression of proteasome activator-gamma in thyroid neoplasm.</title>
        <authorList>
            <person name="Okamura T."/>
            <person name="Taniguchi S."/>
            <person name="Ohkura T."/>
            <person name="Yoshida A."/>
            <person name="Shimizu H."/>
            <person name="Sakai M."/>
            <person name="Maeta H."/>
            <person name="Fukui H."/>
            <person name="Ueta Y."/>
            <person name="Hisatome I."/>
            <person name="Shigemasa C."/>
        </authorList>
    </citation>
    <scope>INDUCTION</scope>
    <scope>SUBCELLULAR LOCATION</scope>
</reference>
<reference key="26">
    <citation type="journal article" date="2004" name="Arch. Biochem. Biophys.">
        <title>Purification procedures determine the proteasome activation properties of REG gamma (PA28 gamma).</title>
        <authorList>
            <person name="Gao X."/>
            <person name="Li J."/>
            <person name="Pratt G."/>
            <person name="Wilk S."/>
            <person name="Rechsteiner M."/>
        </authorList>
    </citation>
    <scope>FUNCTION</scope>
</reference>
<reference key="27">
    <citation type="journal article" date="2008" name="EMBO J.">
        <title>Proteasome activator PA28 gamma regulates p53 by enhancing its MDM2-mediated degradation.</title>
        <authorList>
            <person name="Zhang Z."/>
            <person name="Zhang R."/>
        </authorList>
    </citation>
    <scope>FUNCTION</scope>
    <scope>INTERACTION WITH TP53 AND MDM2</scope>
</reference>
<reference key="28">
    <citation type="journal article" date="2011" name="Cell Host Microbe">
        <title>Antiviral inhibition targeting the HCMV kinase pUL97 requires pUL27-dependent proteasomal degradation of Tip60 acetyltransferase and cell-cycle arrest.</title>
        <authorList>
            <person name="Reitsma J.M."/>
            <person name="Savaryn J.P."/>
            <person name="Faust K."/>
            <person name="Sato H."/>
            <person name="Halligan B.D."/>
            <person name="Terhune S.S."/>
        </authorList>
    </citation>
    <scope>INTERACTION WITH HUMAN CYTOMEGALOVIRUS UL27</scope>
</reference>
<reference key="29">
    <citation type="journal article" date="2018" name="Proc. Natl. Acad. Sci. U.S.A.">
        <title>PIP30/FAM192A is a novel regulator of the nuclear proteasome activator PA28gamma.</title>
        <authorList>
            <person name="Jonik-Nowak B."/>
            <person name="Menneteau T."/>
            <person name="Fesquet D."/>
            <person name="Baldin V."/>
            <person name="Bonne-Andrea C."/>
            <person name="Mechali F."/>
            <person name="Fabre B."/>
            <person name="Boisguerin P."/>
            <person name="de Rossi S."/>
            <person name="Henriquet C."/>
            <person name="Pugniere M."/>
            <person name="Ducoux-Petit M."/>
            <person name="Burlet-Schiltz O."/>
            <person name="Lamond A.I."/>
            <person name="Fort P."/>
            <person name="Boulon S."/>
            <person name="Bousquet M.P."/>
            <person name="Coux O."/>
        </authorList>
    </citation>
    <scope>INTERACTION WITH COIL AND PSME3IP1</scope>
</reference>
<keyword id="KW-0002">3D-structure</keyword>
<keyword id="KW-0007">Acetylation</keyword>
<keyword id="KW-0025">Alternative splicing</keyword>
<keyword id="KW-0053">Apoptosis</keyword>
<keyword id="KW-0131">Cell cycle</keyword>
<keyword id="KW-0963">Cytoplasm</keyword>
<keyword id="KW-0903">Direct protein sequencing</keyword>
<keyword id="KW-0945">Host-virus interaction</keyword>
<keyword id="KW-0539">Nucleus</keyword>
<keyword id="KW-0597">Phosphoprotein</keyword>
<keyword id="KW-0647">Proteasome</keyword>
<keyword id="KW-1267">Proteomics identification</keyword>
<keyword id="KW-1185">Reference proteome</keyword>